<reference key="1">
    <citation type="journal article" date="2014" name="Mol. Biol. Evol.">
        <title>Clawing through evolution: toxin diversification and convergence in the ancient lineage Chilopoda (centipedes).</title>
        <authorList>
            <person name="Undheim E.A."/>
            <person name="Jones A."/>
            <person name="Clauser K.R."/>
            <person name="Holland J.W."/>
            <person name="Pineda S.S."/>
            <person name="King G.F."/>
            <person name="Fry B.G."/>
        </authorList>
    </citation>
    <scope>NUCLEOTIDE SEQUENCE [MRNA]</scope>
    <scope>NOMENCLATURE</scope>
    <source>
        <tissue>Venom gland</tissue>
    </source>
</reference>
<sequence>MKSTFALVFGILMVIAHLSFADEKVLCFDNSEETLNKEIKLFEQCGVTKDNANEENFNEAYICVLEKMEVLDENNQIVIEKFKETEKTEIVNKEEELMAAVDECAENKPTAEPKEFIQCYDEKVDKLCPDDKDIFEEDMEE</sequence>
<comment type="subcellular location">
    <subcellularLocation>
        <location evidence="4">Secreted</location>
    </subcellularLocation>
</comment>
<comment type="tissue specificity">
    <text evidence="4">Expressed by the venom gland.</text>
</comment>
<comment type="PTM">
    <text evidence="3">Contains 3 disulfide bonds.</text>
</comment>
<comment type="similarity">
    <text evidence="3">Belongs to the scoloptoxin-17 family.</text>
</comment>
<comment type="caution">
    <text evidence="4">All E.rubripes family members described in 'Undeheim et al., 2014' have not been imported into UniProtKB. Please, refer to this paper to access them.</text>
</comment>
<comment type="online information" name="National Center for Biotechnology Information (NCBI)">
    <link uri="https://www.ncbi.nlm.nih.gov/nuccore/GASI01000162"/>
</comment>
<proteinExistence type="evidence at transcript level"/>
<dbReference type="SMR" id="P0DQE6"/>
<dbReference type="GO" id="GO:0005576">
    <property type="term" value="C:extracellular region"/>
    <property type="evidence" value="ECO:0007669"/>
    <property type="project" value="UniProtKB-SubCell"/>
</dbReference>
<dbReference type="GO" id="GO:0005549">
    <property type="term" value="F:odorant binding"/>
    <property type="evidence" value="ECO:0007669"/>
    <property type="project" value="InterPro"/>
</dbReference>
<dbReference type="GO" id="GO:0090729">
    <property type="term" value="F:toxin activity"/>
    <property type="evidence" value="ECO:0007669"/>
    <property type="project" value="UniProtKB-KW"/>
</dbReference>
<dbReference type="Gene3D" id="1.10.238.20">
    <property type="entry name" value="Pheromone/general odorant binding protein domain"/>
    <property type="match status" value="1"/>
</dbReference>
<dbReference type="InterPro" id="IPR036728">
    <property type="entry name" value="PBP_GOBP_sf"/>
</dbReference>
<dbReference type="SUPFAM" id="SSF47565">
    <property type="entry name" value="Insect pheromone/odorant-binding proteins"/>
    <property type="match status" value="1"/>
</dbReference>
<feature type="signal peptide" evidence="1">
    <location>
        <begin position="1"/>
        <end position="21"/>
    </location>
</feature>
<feature type="chain" id="PRO_0000446823" description="U-scoloptoxin(17)-Er3a" evidence="3">
    <location>
        <begin position="22"/>
        <end position="141"/>
    </location>
</feature>
<name>TXH3A_ETHRU</name>
<organism>
    <name type="scientific">Ethmostigmus rubripes</name>
    <name type="common">Giant centipede</name>
    <dbReference type="NCBI Taxonomy" id="62613"/>
    <lineage>
        <taxon>Eukaryota</taxon>
        <taxon>Metazoa</taxon>
        <taxon>Ecdysozoa</taxon>
        <taxon>Arthropoda</taxon>
        <taxon>Myriapoda</taxon>
        <taxon>Chilopoda</taxon>
        <taxon>Pleurostigmophora</taxon>
        <taxon>Scolopendromorpha</taxon>
        <taxon>Scolopendridae</taxon>
        <taxon>Ethmostigmus</taxon>
    </lineage>
</organism>
<accession>P0DQE6</accession>
<keyword id="KW-1015">Disulfide bond</keyword>
<keyword id="KW-0964">Secreted</keyword>
<keyword id="KW-0732">Signal</keyword>
<keyword id="KW-0800">Toxin</keyword>
<evidence type="ECO:0000255" key="1"/>
<evidence type="ECO:0000303" key="2">
    <source>
    </source>
</evidence>
<evidence type="ECO:0000305" key="3"/>
<evidence type="ECO:0000305" key="4">
    <source>
    </source>
</evidence>
<protein>
    <recommendedName>
        <fullName evidence="2">U-scoloptoxin(17)-Er3a</fullName>
        <shortName evidence="2">U-SLPTX(17)-Er3a</shortName>
    </recommendedName>
</protein>